<comment type="function">
    <text evidence="1">Catalyzes the isomerization between 2-isopropylmalate and 3-isopropylmalate, via the formation of 2-isopropylmaleate.</text>
</comment>
<comment type="catalytic activity">
    <reaction evidence="1">
        <text>(2R,3S)-3-isopropylmalate = (2S)-2-isopropylmalate</text>
        <dbReference type="Rhea" id="RHEA:32287"/>
        <dbReference type="ChEBI" id="CHEBI:1178"/>
        <dbReference type="ChEBI" id="CHEBI:35121"/>
        <dbReference type="EC" id="4.2.1.33"/>
    </reaction>
</comment>
<comment type="cofactor">
    <cofactor evidence="1">
        <name>[4Fe-4S] cluster</name>
        <dbReference type="ChEBI" id="CHEBI:49883"/>
    </cofactor>
    <text evidence="1">Binds 1 [4Fe-4S] cluster per subunit.</text>
</comment>
<comment type="pathway">
    <text evidence="1">Amino-acid biosynthesis; L-leucine biosynthesis; L-leucine from 3-methyl-2-oxobutanoate: step 2/4.</text>
</comment>
<comment type="subunit">
    <text evidence="1">Heterodimer of LeuC and LeuD.</text>
</comment>
<comment type="similarity">
    <text evidence="1">Belongs to the aconitase/IPM isomerase family. LeuC type 1 subfamily.</text>
</comment>
<comment type="sequence caution" evidence="3">
    <conflict type="erroneous initiation">
        <sequence resource="EMBL-CDS" id="CAE00173"/>
    </conflict>
    <text>Extended N-terminus.</text>
</comment>
<organism>
    <name type="scientific">Haloferax volcanii (strain ATCC 29605 / DSM 3757 / JCM 8879 / NBRC 14742 / NCIMB 2012 / VKM B-1768 / DS2)</name>
    <name type="common">Halobacterium volcanii</name>
    <dbReference type="NCBI Taxonomy" id="309800"/>
    <lineage>
        <taxon>Archaea</taxon>
        <taxon>Methanobacteriati</taxon>
        <taxon>Methanobacteriota</taxon>
        <taxon>Stenosarchaea group</taxon>
        <taxon>Halobacteria</taxon>
        <taxon>Halobacteriales</taxon>
        <taxon>Haloferacaceae</taxon>
        <taxon>Haloferax</taxon>
    </lineage>
</organism>
<gene>
    <name evidence="1" type="primary">leuC</name>
    <name type="ordered locus">HVO_1504</name>
</gene>
<evidence type="ECO:0000255" key="1">
    <source>
        <dbReference type="HAMAP-Rule" id="MF_01026"/>
    </source>
</evidence>
<evidence type="ECO:0000256" key="2">
    <source>
        <dbReference type="SAM" id="MobiDB-lite"/>
    </source>
</evidence>
<evidence type="ECO:0000305" key="3"/>
<sequence>MSEGTLYDKVWEEHTVSELPTGQTQLFCGLHLIHEVTSPQAFGMLQERDLEVAYPNRTHATVDHIVPTSDQSRPFRDDAAEEMMAELEQNVREAGINFSDPTSGEQGIVHVIGPEKGLTQPGMTIVCGDSHTSTHGAFGALAFGIGTSQIRDVLATQTVAMEKKKVRKIEVTGELGPGVEAKDVILEIIRRLGTEGGVGYVYEYAGEAIEDLDMEGRMSICNMSIEGGARAGYVNPDETTYEWLKETEYFQENPERFDELKPYWESIRSDEDAEYDDVVTIDGSELEPVVTWGTTPGQGVGITQPIPAPEDLPEEKQETARMAQEHMGVTPGETMEGYEIDVAFLGSCTNARLPDLRRAAGVVKGRQVADSVRAMVVPGSQRVKAAAEAEGLDEVFKEAGFEWREAGCSMCLGMNEDQLEGDEASASSSNRNFIGRQGSKDGRTVLMNPRMVAAAAVTGEVTDVRELKEVTTV</sequence>
<protein>
    <recommendedName>
        <fullName evidence="1">3-isopropylmalate dehydratase large subunit</fullName>
        <ecNumber evidence="1">4.2.1.33</ecNumber>
    </recommendedName>
    <alternativeName>
        <fullName evidence="1">Alpha-IPM isomerase</fullName>
        <shortName evidence="1">IPMI</shortName>
    </alternativeName>
    <alternativeName>
        <fullName evidence="1">Isopropylmalate isomerase</fullName>
    </alternativeName>
</protein>
<keyword id="KW-0004">4Fe-4S</keyword>
<keyword id="KW-0028">Amino-acid biosynthesis</keyword>
<keyword id="KW-0100">Branched-chain amino acid biosynthesis</keyword>
<keyword id="KW-0408">Iron</keyword>
<keyword id="KW-0411">Iron-sulfur</keyword>
<keyword id="KW-0432">Leucine biosynthesis</keyword>
<keyword id="KW-0456">Lyase</keyword>
<keyword id="KW-0479">Metal-binding</keyword>
<keyword id="KW-1185">Reference proteome</keyword>
<name>LEUC_HALVD</name>
<accession>Q7ZAG7</accession>
<accession>D4GYF0</accession>
<feature type="chain" id="PRO_0000076852" description="3-isopropylmalate dehydratase large subunit">
    <location>
        <begin position="1"/>
        <end position="473"/>
    </location>
</feature>
<feature type="region of interest" description="Disordered" evidence="2">
    <location>
        <begin position="421"/>
        <end position="440"/>
    </location>
</feature>
<feature type="binding site" evidence="1">
    <location>
        <position position="348"/>
    </location>
    <ligand>
        <name>[4Fe-4S] cluster</name>
        <dbReference type="ChEBI" id="CHEBI:49883"/>
    </ligand>
</feature>
<feature type="binding site" evidence="1">
    <location>
        <position position="408"/>
    </location>
    <ligand>
        <name>[4Fe-4S] cluster</name>
        <dbReference type="ChEBI" id="CHEBI:49883"/>
    </ligand>
</feature>
<feature type="binding site" evidence="1">
    <location>
        <position position="411"/>
    </location>
    <ligand>
        <name>[4Fe-4S] cluster</name>
        <dbReference type="ChEBI" id="CHEBI:49883"/>
    </ligand>
</feature>
<reference key="1">
    <citation type="journal article" date="2004" name="Appl. Environ. Microbiol.">
        <title>Development of additional selectable markers for the halophilic archaeon Haloferax volcanii based on the leuB and trpA genes.</title>
        <authorList>
            <person name="Allers T."/>
            <person name="Ngo H.-P."/>
            <person name="Mevarech M."/>
            <person name="Lloyd R.G."/>
        </authorList>
    </citation>
    <scope>NUCLEOTIDE SEQUENCE [GENOMIC DNA]</scope>
    <source>
        <strain>DS2 / DS70</strain>
    </source>
</reference>
<reference key="2">
    <citation type="journal article" date="2010" name="PLoS ONE">
        <title>The complete genome sequence of Haloferax volcanii DS2, a model archaeon.</title>
        <authorList>
            <person name="Hartman A.L."/>
            <person name="Norais C."/>
            <person name="Badger J.H."/>
            <person name="Delmas S."/>
            <person name="Haldenby S."/>
            <person name="Madupu R."/>
            <person name="Robinson J."/>
            <person name="Khouri H."/>
            <person name="Ren Q."/>
            <person name="Lowe T.M."/>
            <person name="Maupin-Furlow J."/>
            <person name="Pohlschroder M."/>
            <person name="Daniels C."/>
            <person name="Pfeiffer F."/>
            <person name="Allers T."/>
            <person name="Eisen J.A."/>
        </authorList>
    </citation>
    <scope>NUCLEOTIDE SEQUENCE [LARGE SCALE GENOMIC DNA]</scope>
    <source>
        <strain>ATCC 29605 / DSM 3757 / JCM 8879 / NBRC 14742 / NCIMB 2012 / VKM B-1768 / DS2</strain>
    </source>
</reference>
<proteinExistence type="inferred from homology"/>
<dbReference type="EC" id="4.2.1.33" evidence="1"/>
<dbReference type="EMBL" id="AJ571689">
    <property type="protein sequence ID" value="CAE00173.1"/>
    <property type="status" value="ALT_INIT"/>
    <property type="molecule type" value="Genomic_DNA"/>
</dbReference>
<dbReference type="EMBL" id="CP001956">
    <property type="protein sequence ID" value="ADE02591.1"/>
    <property type="molecule type" value="Genomic_DNA"/>
</dbReference>
<dbReference type="RefSeq" id="WP_004043431.1">
    <property type="nucleotide sequence ID" value="NC_013967.1"/>
</dbReference>
<dbReference type="SMR" id="Q7ZAG7"/>
<dbReference type="STRING" id="309800.HVO_1504"/>
<dbReference type="PaxDb" id="309800-C498_11211"/>
<dbReference type="EnsemblBacteria" id="ADE02591">
    <property type="protein sequence ID" value="ADE02591"/>
    <property type="gene ID" value="HVO_1504"/>
</dbReference>
<dbReference type="GeneID" id="8926493"/>
<dbReference type="KEGG" id="hvo:HVO_1504"/>
<dbReference type="eggNOG" id="arCOG01698">
    <property type="taxonomic scope" value="Archaea"/>
</dbReference>
<dbReference type="HOGENOM" id="CLU_006714_3_4_2"/>
<dbReference type="OrthoDB" id="6900at2157"/>
<dbReference type="UniPathway" id="UPA00048">
    <property type="reaction ID" value="UER00071"/>
</dbReference>
<dbReference type="Proteomes" id="UP000008243">
    <property type="component" value="Chromosome"/>
</dbReference>
<dbReference type="GO" id="GO:0003861">
    <property type="term" value="F:3-isopropylmalate dehydratase activity"/>
    <property type="evidence" value="ECO:0007669"/>
    <property type="project" value="UniProtKB-UniRule"/>
</dbReference>
<dbReference type="GO" id="GO:0051539">
    <property type="term" value="F:4 iron, 4 sulfur cluster binding"/>
    <property type="evidence" value="ECO:0007669"/>
    <property type="project" value="UniProtKB-KW"/>
</dbReference>
<dbReference type="GO" id="GO:0046872">
    <property type="term" value="F:metal ion binding"/>
    <property type="evidence" value="ECO:0007669"/>
    <property type="project" value="UniProtKB-KW"/>
</dbReference>
<dbReference type="GO" id="GO:0009098">
    <property type="term" value="P:L-leucine biosynthetic process"/>
    <property type="evidence" value="ECO:0007669"/>
    <property type="project" value="UniProtKB-UniRule"/>
</dbReference>
<dbReference type="CDD" id="cd01583">
    <property type="entry name" value="IPMI"/>
    <property type="match status" value="1"/>
</dbReference>
<dbReference type="Gene3D" id="3.30.499.10">
    <property type="entry name" value="Aconitase, domain 3"/>
    <property type="match status" value="2"/>
</dbReference>
<dbReference type="HAMAP" id="MF_01026">
    <property type="entry name" value="LeuC_type1"/>
    <property type="match status" value="1"/>
</dbReference>
<dbReference type="InterPro" id="IPR004430">
    <property type="entry name" value="3-IsopropMal_deHydase_lsu"/>
</dbReference>
<dbReference type="InterPro" id="IPR015931">
    <property type="entry name" value="Acnase/IPM_dHydase_lsu_aba_1/3"/>
</dbReference>
<dbReference type="InterPro" id="IPR001030">
    <property type="entry name" value="Acoase/IPM_deHydtase_lsu_aba"/>
</dbReference>
<dbReference type="InterPro" id="IPR018136">
    <property type="entry name" value="Aconitase_4Fe-4S_BS"/>
</dbReference>
<dbReference type="InterPro" id="IPR036008">
    <property type="entry name" value="Aconitase_4Fe-4S_dom"/>
</dbReference>
<dbReference type="InterPro" id="IPR050067">
    <property type="entry name" value="IPM_dehydratase_rel_enz"/>
</dbReference>
<dbReference type="InterPro" id="IPR033941">
    <property type="entry name" value="IPMI_cat"/>
</dbReference>
<dbReference type="NCBIfam" id="TIGR00170">
    <property type="entry name" value="leuC"/>
    <property type="match status" value="1"/>
</dbReference>
<dbReference type="NCBIfam" id="NF004016">
    <property type="entry name" value="PRK05478.1"/>
    <property type="match status" value="1"/>
</dbReference>
<dbReference type="NCBIfam" id="NF009116">
    <property type="entry name" value="PRK12466.1"/>
    <property type="match status" value="1"/>
</dbReference>
<dbReference type="PANTHER" id="PTHR43822:SF9">
    <property type="entry name" value="3-ISOPROPYLMALATE DEHYDRATASE"/>
    <property type="match status" value="1"/>
</dbReference>
<dbReference type="PANTHER" id="PTHR43822">
    <property type="entry name" value="HOMOACONITASE, MITOCHONDRIAL-RELATED"/>
    <property type="match status" value="1"/>
</dbReference>
<dbReference type="Pfam" id="PF00330">
    <property type="entry name" value="Aconitase"/>
    <property type="match status" value="1"/>
</dbReference>
<dbReference type="PRINTS" id="PR00415">
    <property type="entry name" value="ACONITASE"/>
</dbReference>
<dbReference type="SUPFAM" id="SSF53732">
    <property type="entry name" value="Aconitase iron-sulfur domain"/>
    <property type="match status" value="1"/>
</dbReference>
<dbReference type="PROSITE" id="PS00450">
    <property type="entry name" value="ACONITASE_1"/>
    <property type="match status" value="1"/>
</dbReference>
<dbReference type="PROSITE" id="PS01244">
    <property type="entry name" value="ACONITASE_2"/>
    <property type="match status" value="1"/>
</dbReference>